<reference key="1">
    <citation type="journal article" date="2005" name="Nature">
        <title>The genome of the social amoeba Dictyostelium discoideum.</title>
        <authorList>
            <person name="Eichinger L."/>
            <person name="Pachebat J.A."/>
            <person name="Gloeckner G."/>
            <person name="Rajandream M.A."/>
            <person name="Sucgang R."/>
            <person name="Berriman M."/>
            <person name="Song J."/>
            <person name="Olsen R."/>
            <person name="Szafranski K."/>
            <person name="Xu Q."/>
            <person name="Tunggal B."/>
            <person name="Kummerfeld S."/>
            <person name="Madera M."/>
            <person name="Konfortov B.A."/>
            <person name="Rivero F."/>
            <person name="Bankier A.T."/>
            <person name="Lehmann R."/>
            <person name="Hamlin N."/>
            <person name="Davies R."/>
            <person name="Gaudet P."/>
            <person name="Fey P."/>
            <person name="Pilcher K."/>
            <person name="Chen G."/>
            <person name="Saunders D."/>
            <person name="Sodergren E.J."/>
            <person name="Davis P."/>
            <person name="Kerhornou A."/>
            <person name="Nie X."/>
            <person name="Hall N."/>
            <person name="Anjard C."/>
            <person name="Hemphill L."/>
            <person name="Bason N."/>
            <person name="Farbrother P."/>
            <person name="Desany B."/>
            <person name="Just E."/>
            <person name="Morio T."/>
            <person name="Rost R."/>
            <person name="Churcher C.M."/>
            <person name="Cooper J."/>
            <person name="Haydock S."/>
            <person name="van Driessche N."/>
            <person name="Cronin A."/>
            <person name="Goodhead I."/>
            <person name="Muzny D.M."/>
            <person name="Mourier T."/>
            <person name="Pain A."/>
            <person name="Lu M."/>
            <person name="Harper D."/>
            <person name="Lindsay R."/>
            <person name="Hauser H."/>
            <person name="James K.D."/>
            <person name="Quiles M."/>
            <person name="Madan Babu M."/>
            <person name="Saito T."/>
            <person name="Buchrieser C."/>
            <person name="Wardroper A."/>
            <person name="Felder M."/>
            <person name="Thangavelu M."/>
            <person name="Johnson D."/>
            <person name="Knights A."/>
            <person name="Loulseged H."/>
            <person name="Mungall K.L."/>
            <person name="Oliver K."/>
            <person name="Price C."/>
            <person name="Quail M.A."/>
            <person name="Urushihara H."/>
            <person name="Hernandez J."/>
            <person name="Rabbinowitsch E."/>
            <person name="Steffen D."/>
            <person name="Sanders M."/>
            <person name="Ma J."/>
            <person name="Kohara Y."/>
            <person name="Sharp S."/>
            <person name="Simmonds M.N."/>
            <person name="Spiegler S."/>
            <person name="Tivey A."/>
            <person name="Sugano S."/>
            <person name="White B."/>
            <person name="Walker D."/>
            <person name="Woodward J.R."/>
            <person name="Winckler T."/>
            <person name="Tanaka Y."/>
            <person name="Shaulsky G."/>
            <person name="Schleicher M."/>
            <person name="Weinstock G.M."/>
            <person name="Rosenthal A."/>
            <person name="Cox E.C."/>
            <person name="Chisholm R.L."/>
            <person name="Gibbs R.A."/>
            <person name="Loomis W.F."/>
            <person name="Platzer M."/>
            <person name="Kay R.R."/>
            <person name="Williams J.G."/>
            <person name="Dear P.H."/>
            <person name="Noegel A.A."/>
            <person name="Barrell B.G."/>
            <person name="Kuspa A."/>
        </authorList>
    </citation>
    <scope>NUCLEOTIDE SEQUENCE [LARGE SCALE GENOMIC DNA]</scope>
    <source>
        <strain>AX4</strain>
    </source>
</reference>
<proteinExistence type="inferred from homology"/>
<evidence type="ECO:0000250" key="1"/>
<evidence type="ECO:0000256" key="2">
    <source>
        <dbReference type="SAM" id="MobiDB-lite"/>
    </source>
</evidence>
<evidence type="ECO:0000305" key="3"/>
<keyword id="KW-0342">GTP-binding</keyword>
<keyword id="KW-0547">Nucleotide-binding</keyword>
<keyword id="KW-1185">Reference proteome</keyword>
<organism>
    <name type="scientific">Dictyostelium discoideum</name>
    <name type="common">Social amoeba</name>
    <dbReference type="NCBI Taxonomy" id="44689"/>
    <lineage>
        <taxon>Eukaryota</taxon>
        <taxon>Amoebozoa</taxon>
        <taxon>Evosea</taxon>
        <taxon>Eumycetozoa</taxon>
        <taxon>Dictyostelia</taxon>
        <taxon>Dictyosteliales</taxon>
        <taxon>Dictyosteliaceae</taxon>
        <taxon>Dictyostelium</taxon>
    </lineage>
</organism>
<name>RABV_DICDI</name>
<dbReference type="EMBL" id="AAFI02000047">
    <property type="protein sequence ID" value="EAL66029.2"/>
    <property type="molecule type" value="Genomic_DNA"/>
</dbReference>
<dbReference type="RefSeq" id="XP_639353.2">
    <property type="nucleotide sequence ID" value="XM_634261.2"/>
</dbReference>
<dbReference type="SMR" id="Q54RY4"/>
<dbReference type="STRING" id="44689.Q54RY4"/>
<dbReference type="PaxDb" id="44689-DDB0230042"/>
<dbReference type="EnsemblProtists" id="EAL66029">
    <property type="protein sequence ID" value="EAL66029"/>
    <property type="gene ID" value="DDB_G0282899"/>
</dbReference>
<dbReference type="GeneID" id="8623793"/>
<dbReference type="KEGG" id="ddi:DDB_G0282899"/>
<dbReference type="dictyBase" id="DDB_G0282899">
    <property type="gene designation" value="rabV"/>
</dbReference>
<dbReference type="VEuPathDB" id="AmoebaDB:DDB_G0282899"/>
<dbReference type="eggNOG" id="KOG0078">
    <property type="taxonomic scope" value="Eukaryota"/>
</dbReference>
<dbReference type="HOGENOM" id="CLU_041217_10_2_1"/>
<dbReference type="InParanoid" id="Q54RY4"/>
<dbReference type="OMA" id="IDELFYY"/>
<dbReference type="PhylomeDB" id="Q54RY4"/>
<dbReference type="Reactome" id="R-DDI-210500">
    <property type="pathway name" value="Glutamate Neurotransmitter Release Cycle"/>
</dbReference>
<dbReference type="Reactome" id="R-DDI-6798695">
    <property type="pathway name" value="Neutrophil degranulation"/>
</dbReference>
<dbReference type="Reactome" id="R-DDI-8873719">
    <property type="pathway name" value="RAB geranylgeranylation"/>
</dbReference>
<dbReference type="Reactome" id="R-DDI-8876198">
    <property type="pathway name" value="RAB GEFs exchange GTP for GDP on RABs"/>
</dbReference>
<dbReference type="PRO" id="PR:Q54RY4"/>
<dbReference type="Proteomes" id="UP000002195">
    <property type="component" value="Chromosome 3"/>
</dbReference>
<dbReference type="GO" id="GO:0016020">
    <property type="term" value="C:membrane"/>
    <property type="evidence" value="ECO:0000318"/>
    <property type="project" value="GO_Central"/>
</dbReference>
<dbReference type="GO" id="GO:0005525">
    <property type="term" value="F:GTP binding"/>
    <property type="evidence" value="ECO:0007669"/>
    <property type="project" value="UniProtKB-KW"/>
</dbReference>
<dbReference type="GO" id="GO:0003924">
    <property type="term" value="F:GTPase activity"/>
    <property type="evidence" value="ECO:0000318"/>
    <property type="project" value="GO_Central"/>
</dbReference>
<dbReference type="GO" id="GO:0006887">
    <property type="term" value="P:exocytosis"/>
    <property type="evidence" value="ECO:0000318"/>
    <property type="project" value="GO_Central"/>
</dbReference>
<dbReference type="CDD" id="cd00154">
    <property type="entry name" value="Rab"/>
    <property type="match status" value="1"/>
</dbReference>
<dbReference type="FunFam" id="3.40.50.300:FF:001447">
    <property type="entry name" value="Ras-related protein Rab-1B"/>
    <property type="match status" value="1"/>
</dbReference>
<dbReference type="Gene3D" id="3.40.50.300">
    <property type="entry name" value="P-loop containing nucleotide triphosphate hydrolases"/>
    <property type="match status" value="1"/>
</dbReference>
<dbReference type="InterPro" id="IPR027417">
    <property type="entry name" value="P-loop_NTPase"/>
</dbReference>
<dbReference type="InterPro" id="IPR005225">
    <property type="entry name" value="Small_GTP-bd"/>
</dbReference>
<dbReference type="InterPro" id="IPR001806">
    <property type="entry name" value="Small_GTPase"/>
</dbReference>
<dbReference type="NCBIfam" id="TIGR00231">
    <property type="entry name" value="small_GTP"/>
    <property type="match status" value="1"/>
</dbReference>
<dbReference type="PANTHER" id="PTHR47978">
    <property type="match status" value="1"/>
</dbReference>
<dbReference type="Pfam" id="PF00071">
    <property type="entry name" value="Ras"/>
    <property type="match status" value="1"/>
</dbReference>
<dbReference type="PRINTS" id="PR00449">
    <property type="entry name" value="RASTRNSFRMNG"/>
</dbReference>
<dbReference type="SMART" id="SM00175">
    <property type="entry name" value="RAB"/>
    <property type="match status" value="1"/>
</dbReference>
<dbReference type="SMART" id="SM00173">
    <property type="entry name" value="RAS"/>
    <property type="match status" value="1"/>
</dbReference>
<dbReference type="SMART" id="SM00174">
    <property type="entry name" value="RHO"/>
    <property type="match status" value="1"/>
</dbReference>
<dbReference type="SUPFAM" id="SSF52540">
    <property type="entry name" value="P-loop containing nucleoside triphosphate hydrolases"/>
    <property type="match status" value="1"/>
</dbReference>
<dbReference type="PROSITE" id="PS51419">
    <property type="entry name" value="RAB"/>
    <property type="match status" value="1"/>
</dbReference>
<gene>
    <name type="primary">rabV</name>
    <name type="ORF">DDB_G0282899</name>
</gene>
<accession>Q54RY4</accession>
<feature type="chain" id="PRO_0000332772" description="Ras-related protein RabV">
    <location>
        <begin position="1"/>
        <end position="233"/>
    </location>
</feature>
<feature type="region of interest" description="Disordered" evidence="2">
    <location>
        <begin position="143"/>
        <end position="182"/>
    </location>
</feature>
<feature type="short sequence motif" description="Effector region" evidence="1">
    <location>
        <begin position="37"/>
        <end position="45"/>
    </location>
</feature>
<feature type="compositionally biased region" description="Low complexity" evidence="2">
    <location>
        <begin position="144"/>
        <end position="180"/>
    </location>
</feature>
<feature type="binding site" evidence="1">
    <location>
        <begin position="15"/>
        <end position="22"/>
    </location>
    <ligand>
        <name>GTP</name>
        <dbReference type="ChEBI" id="CHEBI:37565"/>
    </ligand>
</feature>
<feature type="binding site" evidence="1">
    <location>
        <begin position="63"/>
        <end position="67"/>
    </location>
    <ligand>
        <name>GTP</name>
        <dbReference type="ChEBI" id="CHEBI:37565"/>
    </ligand>
</feature>
<feature type="binding site" evidence="1">
    <location>
        <begin position="122"/>
        <end position="125"/>
    </location>
    <ligand>
        <name>GTP</name>
        <dbReference type="ChEBI" id="CHEBI:37565"/>
    </ligand>
</feature>
<sequence length="233" mass="27197">MSNKKNNIIKIMILGEKEVGKSSLLIRATKDEFNSQYIPTIGIDFDYKIMEIKGEKYKLQIWDYVSHDHINVFNKQVLSNTKIILLLFDLTNKSSFDSINNWLLKLDQSNKDNSIQIFLVGTKSDLISNRQVSLLDIQSKFIQNNNNNNNNNNNNNNNNNNNNNNNNNNNNNSNNNNNNNLQYFEISSKDNNNVEFLFTSVIDYYLLKAQPKFEEEIKNKKKKLKITVSWFDI</sequence>
<protein>
    <recommendedName>
        <fullName>Ras-related protein RabV</fullName>
    </recommendedName>
</protein>
<comment type="similarity">
    <text evidence="3">Belongs to the small GTPase superfamily. Rab family.</text>
</comment>